<accession>B1IXM6</accession>
<comment type="function">
    <text evidence="1">Component of the acetyl coenzyme A carboxylase (ACC) complex. Biotin carboxylase (BC) catalyzes the carboxylation of biotin on its carrier protein (BCCP) and then the CO(2) group is transferred by the transcarboxylase to acetyl-CoA to form malonyl-CoA.</text>
</comment>
<comment type="catalytic activity">
    <reaction evidence="1">
        <text>N(6)-carboxybiotinyl-L-lysyl-[protein] + acetyl-CoA = N(6)-biotinyl-L-lysyl-[protein] + malonyl-CoA</text>
        <dbReference type="Rhea" id="RHEA:54728"/>
        <dbReference type="Rhea" id="RHEA-COMP:10505"/>
        <dbReference type="Rhea" id="RHEA-COMP:10506"/>
        <dbReference type="ChEBI" id="CHEBI:57288"/>
        <dbReference type="ChEBI" id="CHEBI:57384"/>
        <dbReference type="ChEBI" id="CHEBI:83144"/>
        <dbReference type="ChEBI" id="CHEBI:83145"/>
        <dbReference type="EC" id="2.1.3.15"/>
    </reaction>
</comment>
<comment type="cofactor">
    <cofactor evidence="1">
        <name>Zn(2+)</name>
        <dbReference type="ChEBI" id="CHEBI:29105"/>
    </cofactor>
    <text evidence="1">Binds 1 zinc ion per subunit.</text>
</comment>
<comment type="pathway">
    <text evidence="1">Lipid metabolism; malonyl-CoA biosynthesis; malonyl-CoA from acetyl-CoA: step 1/1.</text>
</comment>
<comment type="subunit">
    <text evidence="1">Acetyl-CoA carboxylase is a heterohexamer composed of biotin carboxyl carrier protein (AccB), biotin carboxylase (AccC) and two subunits each of ACCase subunit alpha (AccA) and ACCase subunit beta (AccD).</text>
</comment>
<comment type="subcellular location">
    <subcellularLocation>
        <location evidence="1">Cytoplasm</location>
    </subcellularLocation>
</comment>
<comment type="similarity">
    <text evidence="1">Belongs to the AccD/PCCB family.</text>
</comment>
<keyword id="KW-0067">ATP-binding</keyword>
<keyword id="KW-0963">Cytoplasm</keyword>
<keyword id="KW-0275">Fatty acid biosynthesis</keyword>
<keyword id="KW-0276">Fatty acid metabolism</keyword>
<keyword id="KW-0444">Lipid biosynthesis</keyword>
<keyword id="KW-0443">Lipid metabolism</keyword>
<keyword id="KW-0479">Metal-binding</keyword>
<keyword id="KW-0547">Nucleotide-binding</keyword>
<keyword id="KW-0808">Transferase</keyword>
<keyword id="KW-0862">Zinc</keyword>
<keyword id="KW-0863">Zinc-finger</keyword>
<gene>
    <name evidence="1" type="primary">accD</name>
    <name type="ordered locus">EcolC_1336</name>
</gene>
<protein>
    <recommendedName>
        <fullName evidence="1">Acetyl-coenzyme A carboxylase carboxyl transferase subunit beta</fullName>
        <shortName evidence="1">ACCase subunit beta</shortName>
        <shortName evidence="1">Acetyl-CoA carboxylase carboxyltransferase subunit beta</shortName>
        <ecNumber evidence="1">2.1.3.15</ecNumber>
    </recommendedName>
</protein>
<dbReference type="EC" id="2.1.3.15" evidence="1"/>
<dbReference type="EMBL" id="CP000946">
    <property type="protein sequence ID" value="ACA77002.1"/>
    <property type="molecule type" value="Genomic_DNA"/>
</dbReference>
<dbReference type="RefSeq" id="WP_000118404.1">
    <property type="nucleotide sequence ID" value="NZ_MTFT01000028.1"/>
</dbReference>
<dbReference type="SMR" id="B1IXM6"/>
<dbReference type="GeneID" id="75202601"/>
<dbReference type="KEGG" id="ecl:EcolC_1336"/>
<dbReference type="HOGENOM" id="CLU_015486_1_0_6"/>
<dbReference type="UniPathway" id="UPA00655">
    <property type="reaction ID" value="UER00711"/>
</dbReference>
<dbReference type="GO" id="GO:0009329">
    <property type="term" value="C:acetate CoA-transferase complex"/>
    <property type="evidence" value="ECO:0007669"/>
    <property type="project" value="TreeGrafter"/>
</dbReference>
<dbReference type="GO" id="GO:0003989">
    <property type="term" value="F:acetyl-CoA carboxylase activity"/>
    <property type="evidence" value="ECO:0007669"/>
    <property type="project" value="InterPro"/>
</dbReference>
<dbReference type="GO" id="GO:0005524">
    <property type="term" value="F:ATP binding"/>
    <property type="evidence" value="ECO:0007669"/>
    <property type="project" value="UniProtKB-KW"/>
</dbReference>
<dbReference type="GO" id="GO:0016743">
    <property type="term" value="F:carboxyl- or carbamoyltransferase activity"/>
    <property type="evidence" value="ECO:0007669"/>
    <property type="project" value="UniProtKB-UniRule"/>
</dbReference>
<dbReference type="GO" id="GO:0008270">
    <property type="term" value="F:zinc ion binding"/>
    <property type="evidence" value="ECO:0007669"/>
    <property type="project" value="UniProtKB-UniRule"/>
</dbReference>
<dbReference type="GO" id="GO:0006633">
    <property type="term" value="P:fatty acid biosynthetic process"/>
    <property type="evidence" value="ECO:0007669"/>
    <property type="project" value="UniProtKB-KW"/>
</dbReference>
<dbReference type="GO" id="GO:2001295">
    <property type="term" value="P:malonyl-CoA biosynthetic process"/>
    <property type="evidence" value="ECO:0007669"/>
    <property type="project" value="UniProtKB-UniRule"/>
</dbReference>
<dbReference type="FunFam" id="3.90.226.10:FF:000013">
    <property type="entry name" value="Acetyl-coenzyme A carboxylase carboxyl transferase subunit beta"/>
    <property type="match status" value="1"/>
</dbReference>
<dbReference type="Gene3D" id="3.90.226.10">
    <property type="entry name" value="2-enoyl-CoA Hydratase, Chain A, domain 1"/>
    <property type="match status" value="1"/>
</dbReference>
<dbReference type="HAMAP" id="MF_01395">
    <property type="entry name" value="AcetylCoA_CT_beta"/>
    <property type="match status" value="1"/>
</dbReference>
<dbReference type="InterPro" id="IPR034733">
    <property type="entry name" value="AcCoA_carboxyl_beta"/>
</dbReference>
<dbReference type="InterPro" id="IPR000438">
    <property type="entry name" value="Acetyl_CoA_COase_Trfase_b_su"/>
</dbReference>
<dbReference type="InterPro" id="IPR029045">
    <property type="entry name" value="ClpP/crotonase-like_dom_sf"/>
</dbReference>
<dbReference type="InterPro" id="IPR011762">
    <property type="entry name" value="COA_CT_N"/>
</dbReference>
<dbReference type="InterPro" id="IPR041010">
    <property type="entry name" value="Znf-ACC"/>
</dbReference>
<dbReference type="NCBIfam" id="TIGR00515">
    <property type="entry name" value="accD"/>
    <property type="match status" value="1"/>
</dbReference>
<dbReference type="PANTHER" id="PTHR42995">
    <property type="entry name" value="ACETYL-COENZYME A CARBOXYLASE CARBOXYL TRANSFERASE SUBUNIT BETA, CHLOROPLASTIC"/>
    <property type="match status" value="1"/>
</dbReference>
<dbReference type="PANTHER" id="PTHR42995:SF5">
    <property type="entry name" value="ACETYL-COENZYME A CARBOXYLASE CARBOXYL TRANSFERASE SUBUNIT BETA, CHLOROPLASTIC"/>
    <property type="match status" value="1"/>
</dbReference>
<dbReference type="Pfam" id="PF01039">
    <property type="entry name" value="Carboxyl_trans"/>
    <property type="match status" value="1"/>
</dbReference>
<dbReference type="Pfam" id="PF17848">
    <property type="entry name" value="Zn_ribbon_ACC"/>
    <property type="match status" value="1"/>
</dbReference>
<dbReference type="PRINTS" id="PR01070">
    <property type="entry name" value="ACCCTRFRASEB"/>
</dbReference>
<dbReference type="SUPFAM" id="SSF52096">
    <property type="entry name" value="ClpP/crotonase"/>
    <property type="match status" value="1"/>
</dbReference>
<dbReference type="PROSITE" id="PS50980">
    <property type="entry name" value="COA_CT_NTER"/>
    <property type="match status" value="1"/>
</dbReference>
<name>ACCD_ECOLC</name>
<proteinExistence type="inferred from homology"/>
<organism>
    <name type="scientific">Escherichia coli (strain ATCC 8739 / DSM 1576 / NBRC 3972 / NCIMB 8545 / WDCM 00012 / Crooks)</name>
    <dbReference type="NCBI Taxonomy" id="481805"/>
    <lineage>
        <taxon>Bacteria</taxon>
        <taxon>Pseudomonadati</taxon>
        <taxon>Pseudomonadota</taxon>
        <taxon>Gammaproteobacteria</taxon>
        <taxon>Enterobacterales</taxon>
        <taxon>Enterobacteriaceae</taxon>
        <taxon>Escherichia</taxon>
    </lineage>
</organism>
<reference key="1">
    <citation type="submission" date="2008-02" db="EMBL/GenBank/DDBJ databases">
        <title>Complete sequence of Escherichia coli C str. ATCC 8739.</title>
        <authorList>
            <person name="Copeland A."/>
            <person name="Lucas S."/>
            <person name="Lapidus A."/>
            <person name="Glavina del Rio T."/>
            <person name="Dalin E."/>
            <person name="Tice H."/>
            <person name="Bruce D."/>
            <person name="Goodwin L."/>
            <person name="Pitluck S."/>
            <person name="Kiss H."/>
            <person name="Brettin T."/>
            <person name="Detter J.C."/>
            <person name="Han C."/>
            <person name="Kuske C.R."/>
            <person name="Schmutz J."/>
            <person name="Larimer F."/>
            <person name="Land M."/>
            <person name="Hauser L."/>
            <person name="Kyrpides N."/>
            <person name="Mikhailova N."/>
            <person name="Ingram L."/>
            <person name="Richardson P."/>
        </authorList>
    </citation>
    <scope>NUCLEOTIDE SEQUENCE [LARGE SCALE GENOMIC DNA]</scope>
    <source>
        <strain>ATCC 8739 / DSM 1576 / NBRC 3972 / NCIMB 8545 / WDCM 00012 / Crooks</strain>
    </source>
</reference>
<evidence type="ECO:0000255" key="1">
    <source>
        <dbReference type="HAMAP-Rule" id="MF_01395"/>
    </source>
</evidence>
<evidence type="ECO:0000255" key="2">
    <source>
        <dbReference type="PROSITE-ProRule" id="PRU01136"/>
    </source>
</evidence>
<evidence type="ECO:0000256" key="3">
    <source>
        <dbReference type="SAM" id="MobiDB-lite"/>
    </source>
</evidence>
<feature type="chain" id="PRO_0000358985" description="Acetyl-coenzyme A carboxylase carboxyl transferase subunit beta">
    <location>
        <begin position="1"/>
        <end position="304"/>
    </location>
</feature>
<feature type="domain" description="CoA carboxyltransferase N-terminal" evidence="2">
    <location>
        <begin position="23"/>
        <end position="292"/>
    </location>
</feature>
<feature type="zinc finger region" description="C4-type" evidence="1">
    <location>
        <begin position="27"/>
        <end position="49"/>
    </location>
</feature>
<feature type="region of interest" description="Disordered" evidence="3">
    <location>
        <begin position="284"/>
        <end position="304"/>
    </location>
</feature>
<feature type="compositionally biased region" description="Pro residues" evidence="3">
    <location>
        <begin position="295"/>
        <end position="304"/>
    </location>
</feature>
<feature type="binding site" evidence="1">
    <location>
        <position position="27"/>
    </location>
    <ligand>
        <name>Zn(2+)</name>
        <dbReference type="ChEBI" id="CHEBI:29105"/>
    </ligand>
</feature>
<feature type="binding site" evidence="1">
    <location>
        <position position="30"/>
    </location>
    <ligand>
        <name>Zn(2+)</name>
        <dbReference type="ChEBI" id="CHEBI:29105"/>
    </ligand>
</feature>
<feature type="binding site" evidence="1">
    <location>
        <position position="46"/>
    </location>
    <ligand>
        <name>Zn(2+)</name>
        <dbReference type="ChEBI" id="CHEBI:29105"/>
    </ligand>
</feature>
<feature type="binding site" evidence="1">
    <location>
        <position position="49"/>
    </location>
    <ligand>
        <name>Zn(2+)</name>
        <dbReference type="ChEBI" id="CHEBI:29105"/>
    </ligand>
</feature>
<sequence>MSWIERIKSNITPTRKASIPEGVWTKCDSCGQVLYRAELERNLEVCPKCDHHMRMTARNRLHSLLDEGSLVELGSELEPKDVLKFRDSKKYKDRLASAQKETGEKDALVVMKGTLYGMPVVAAAFEFAFMGGSMGSVVGARFVRAVEQALEDNCPLICFSASGGARMQEALMSLMQMAKTSAALAKMQERGLPYISVLTDPTMGGVSASFAMLGDLNIAEPKALIGFAGPRVIEQTVREKLPPGFQRSEFLIEKGAIDMIVRRPEMRLKLASILAKLMNLPAPNPEAPREGVVVPPVPDQEPEA</sequence>